<evidence type="ECO:0000250" key="1"/>
<evidence type="ECO:0000250" key="2">
    <source>
        <dbReference type="UniProtKB" id="O76460"/>
    </source>
</evidence>
<evidence type="ECO:0000255" key="3"/>
<evidence type="ECO:0000255" key="4">
    <source>
        <dbReference type="PROSITE-ProRule" id="PRU00541"/>
    </source>
</evidence>
<evidence type="ECO:0000255" key="5">
    <source>
        <dbReference type="PROSITE-ProRule" id="PRU00542"/>
    </source>
</evidence>
<evidence type="ECO:0000256" key="6">
    <source>
        <dbReference type="SAM" id="MobiDB-lite"/>
    </source>
</evidence>
<evidence type="ECO:0000312" key="7">
    <source>
        <dbReference type="EMBL" id="EDW57784.1"/>
    </source>
</evidence>
<protein>
    <recommendedName>
        <fullName evidence="2">DNA repair and recombination protein RAD54-like</fullName>
        <ecNumber>3.6.4.-</ecNumber>
    </recommendedName>
    <alternativeName>
        <fullName evidence="2">Protein okra</fullName>
    </alternativeName>
</protein>
<accession>B4M9A8</accession>
<keyword id="KW-0067">ATP-binding</keyword>
<keyword id="KW-0131">Cell cycle</keyword>
<keyword id="KW-0132">Cell division</keyword>
<keyword id="KW-0227">DNA damage</keyword>
<keyword id="KW-0234">DNA repair</keyword>
<keyword id="KW-0238">DNA-binding</keyword>
<keyword id="KW-0347">Helicase</keyword>
<keyword id="KW-0378">Hydrolase</keyword>
<keyword id="KW-0469">Meiosis</keyword>
<keyword id="KW-0498">Mitosis</keyword>
<keyword id="KW-0547">Nucleotide-binding</keyword>
<keyword id="KW-0539">Nucleus</keyword>
<keyword id="KW-0597">Phosphoprotein</keyword>
<keyword id="KW-1185">Reference proteome</keyword>
<feature type="chain" id="PRO_0000392526" description="DNA repair and recombination protein RAD54-like">
    <location>
        <begin position="1"/>
        <end position="786"/>
    </location>
</feature>
<feature type="domain" description="Helicase ATP-binding" evidence="4">
    <location>
        <begin position="165"/>
        <end position="340"/>
    </location>
</feature>
<feature type="domain" description="Helicase C-terminal" evidence="5">
    <location>
        <begin position="497"/>
        <end position="654"/>
    </location>
</feature>
<feature type="region of interest" description="Required for chromatin remodeling, strand pairing activities and coupling of ATPase activity" evidence="2">
    <location>
        <begin position="2"/>
        <end position="9"/>
    </location>
</feature>
<feature type="region of interest" description="Disordered" evidence="6">
    <location>
        <begin position="740"/>
        <end position="786"/>
    </location>
</feature>
<feature type="short sequence motif" description="DEGH box" evidence="3">
    <location>
        <begin position="291"/>
        <end position="294"/>
    </location>
</feature>
<feature type="compositionally biased region" description="Polar residues" evidence="6">
    <location>
        <begin position="752"/>
        <end position="766"/>
    </location>
</feature>
<feature type="binding site" evidence="4">
    <location>
        <begin position="178"/>
        <end position="185"/>
    </location>
    <ligand>
        <name>ATP</name>
        <dbReference type="ChEBI" id="CHEBI:30616"/>
    </ligand>
</feature>
<feature type="modified residue" description="Phosphothreonine" evidence="2">
    <location>
        <position position="22"/>
    </location>
</feature>
<reference evidence="7" key="1">
    <citation type="journal article" date="2007" name="Nature">
        <title>Evolution of genes and genomes on the Drosophila phylogeny.</title>
        <authorList>
            <consortium name="Drosophila 12 genomes consortium"/>
        </authorList>
    </citation>
    <scope>NUCLEOTIDE SEQUENCE [LARGE SCALE GENOMIC DNA]</scope>
    <source>
        <strain evidence="7">Tucson 15010-1051.87</strain>
    </source>
</reference>
<sequence>MRRSLAPSQRLGVRIKSKDAFTPPLQKKNKRVCQIELQKRQSALRDATNTVELPLPIRFTANSDYEQAIAKVLARKFKVPIANYVPDYGGNRTLGVRRSIVRRALHDPQACNALVLYTPPAYTEHERMSLDPSKLQVHVVVDPILSNVLRPHQREGVRFMYECVEGKRGNFNGCIMADEMGLGKTLQCVTLTWTLLRQSPDCKPTISKAIVVSPSSLVKNWEKEFTKWLHGRMHCLAMEGGSKEDTTRTLEQFAMNTATRCGTPVLLISYETFRLYSHILCKTEVGMVICDEGHRLKNSDNLTYQALMGLKTKRRVLLSGTPIQNDLTEYFSLVNFVNPEMLGTGSDFKRNFENAILRGQNADSTDAERERALEKTQELVGLVNQCIIRRTNQILTKYLPVKFEMVVCAKLTAVQLQLYTNFLKSDQVRRSLADCTDKTTLTALADITTLKKLCNHPDLIYEKIAAREKGFENSQNVLPPNYKPKDVNPELSGKFMLLDFMLAAIRANSDDKVVLISNYTQTLDLFEQLARKRKYSYVRLDGTMTIKKRSKVVDRFNDPATDCFLFMLSSKAGGCGLNLIGANRLFMFDPDWNPANDEQAMARVWRDGQKKPCYIYRLVASGSIEEKILQRQTHKKSLSSSIIDNNDSAEKHFTRDDLKDLFRFEANVLSDTHNKLKCKRCFQDVQRQPPPENSDCTSHLSQWFHCSNNRGLPDSILSQAWMASKCVSFVFHHRSQGDAKQPTCITEDNHSEQPQLNSKRNANSVLENDDDEDFDPNSSDEKFLGF</sequence>
<name>RAD54_DROVI</name>
<organism>
    <name type="scientific">Drosophila virilis</name>
    <name type="common">Fruit fly</name>
    <dbReference type="NCBI Taxonomy" id="7244"/>
    <lineage>
        <taxon>Eukaryota</taxon>
        <taxon>Metazoa</taxon>
        <taxon>Ecdysozoa</taxon>
        <taxon>Arthropoda</taxon>
        <taxon>Hexapoda</taxon>
        <taxon>Insecta</taxon>
        <taxon>Pterygota</taxon>
        <taxon>Neoptera</taxon>
        <taxon>Endopterygota</taxon>
        <taxon>Diptera</taxon>
        <taxon>Brachycera</taxon>
        <taxon>Muscomorpha</taxon>
        <taxon>Ephydroidea</taxon>
        <taxon>Drosophilidae</taxon>
        <taxon>Drosophila</taxon>
    </lineage>
</organism>
<comment type="function">
    <text evidence="2">Involved in mitotic DNA repair and meiotic recombination. Functions in the recombinational DNA repair pathway. Essential for interhomolog gene conversion (GC), but may have a less important role in intersister GC than spn-A/Rad51. In the presence of DNA, spn-A/Rad51 enhances the ATPase activity of okr/Rad54 (By similarity).</text>
</comment>
<comment type="subunit">
    <text evidence="1">Interacts (via N-terminus) with spn-A/Rad51.</text>
</comment>
<comment type="subcellular location">
    <subcellularLocation>
        <location evidence="2">Nucleus</location>
    </subcellularLocation>
</comment>
<comment type="similarity">
    <text evidence="3">Belongs to the SNF2/RAD54 helicase family.</text>
</comment>
<dbReference type="EC" id="3.6.4.-"/>
<dbReference type="EMBL" id="CH940654">
    <property type="protein sequence ID" value="EDW57784.1"/>
    <property type="molecule type" value="Genomic_DNA"/>
</dbReference>
<dbReference type="RefSeq" id="XP_002057711.1">
    <property type="nucleotide sequence ID" value="XM_002057675.4"/>
</dbReference>
<dbReference type="SMR" id="B4M9A8"/>
<dbReference type="FunCoup" id="B4M9A8">
    <property type="interactions" value="1195"/>
</dbReference>
<dbReference type="STRING" id="7244.B4M9A8"/>
<dbReference type="EnsemblMetazoa" id="FBtr0234205">
    <property type="protein sequence ID" value="FBpp0232697"/>
    <property type="gene ID" value="FBgn0205441"/>
</dbReference>
<dbReference type="EnsemblMetazoa" id="XM_002057675.3">
    <property type="protein sequence ID" value="XP_002057711.1"/>
    <property type="gene ID" value="LOC6634100"/>
</dbReference>
<dbReference type="GeneID" id="6634100"/>
<dbReference type="KEGG" id="dvi:6634100"/>
<dbReference type="CTD" id="33507"/>
<dbReference type="eggNOG" id="KOG0390">
    <property type="taxonomic scope" value="Eukaryota"/>
</dbReference>
<dbReference type="HOGENOM" id="CLU_000315_10_5_1"/>
<dbReference type="InParanoid" id="B4M9A8"/>
<dbReference type="OMA" id="YTEHERM"/>
<dbReference type="OrthoDB" id="413460at2759"/>
<dbReference type="PhylomeDB" id="B4M9A8"/>
<dbReference type="ChiTaRS" id="okr">
    <property type="organism name" value="fly"/>
</dbReference>
<dbReference type="Proteomes" id="UP000008792">
    <property type="component" value="Unassembled WGS sequence"/>
</dbReference>
<dbReference type="GO" id="GO:0005634">
    <property type="term" value="C:nucleus"/>
    <property type="evidence" value="ECO:0000250"/>
    <property type="project" value="UniProtKB"/>
</dbReference>
<dbReference type="GO" id="GO:0005524">
    <property type="term" value="F:ATP binding"/>
    <property type="evidence" value="ECO:0007669"/>
    <property type="project" value="UniProtKB-KW"/>
</dbReference>
<dbReference type="GO" id="GO:0016887">
    <property type="term" value="F:ATP hydrolysis activity"/>
    <property type="evidence" value="ECO:0007669"/>
    <property type="project" value="EnsemblMetazoa"/>
</dbReference>
<dbReference type="GO" id="GO:0140658">
    <property type="term" value="F:ATP-dependent chromatin remodeler activity"/>
    <property type="evidence" value="ECO:0007669"/>
    <property type="project" value="EnsemblMetazoa"/>
</dbReference>
<dbReference type="GO" id="GO:0003677">
    <property type="term" value="F:DNA binding"/>
    <property type="evidence" value="ECO:0007669"/>
    <property type="project" value="UniProtKB-KW"/>
</dbReference>
<dbReference type="GO" id="GO:0015616">
    <property type="term" value="F:DNA translocase activity"/>
    <property type="evidence" value="ECO:0007669"/>
    <property type="project" value="TreeGrafter"/>
</dbReference>
<dbReference type="GO" id="GO:0004386">
    <property type="term" value="F:helicase activity"/>
    <property type="evidence" value="ECO:0007669"/>
    <property type="project" value="UniProtKB-KW"/>
</dbReference>
<dbReference type="GO" id="GO:0051301">
    <property type="term" value="P:cell division"/>
    <property type="evidence" value="ECO:0007669"/>
    <property type="project" value="UniProtKB-KW"/>
</dbReference>
<dbReference type="GO" id="GO:0006338">
    <property type="term" value="P:chromatin remodeling"/>
    <property type="evidence" value="ECO:0000250"/>
    <property type="project" value="UniProtKB"/>
</dbReference>
<dbReference type="GO" id="GO:0043150">
    <property type="term" value="P:DNA synthesis involved in double-strand break repair via homologous recombination"/>
    <property type="evidence" value="ECO:0000250"/>
    <property type="project" value="UniProtKB"/>
</dbReference>
<dbReference type="GO" id="GO:0000724">
    <property type="term" value="P:double-strand break repair via homologous recombination"/>
    <property type="evidence" value="ECO:0000250"/>
    <property type="project" value="UniProtKB"/>
</dbReference>
<dbReference type="GO" id="GO:0045003">
    <property type="term" value="P:double-strand break repair via synthesis-dependent strand annealing"/>
    <property type="evidence" value="ECO:0007669"/>
    <property type="project" value="EnsemblMetazoa"/>
</dbReference>
<dbReference type="GO" id="GO:0000711">
    <property type="term" value="P:meiotic DNA repair synthesis"/>
    <property type="evidence" value="ECO:0000250"/>
    <property type="project" value="UniProtKB"/>
</dbReference>
<dbReference type="GO" id="GO:0030716">
    <property type="term" value="P:oocyte fate determination"/>
    <property type="evidence" value="ECO:0007669"/>
    <property type="project" value="EnsemblMetazoa"/>
</dbReference>
<dbReference type="GO" id="GO:0048477">
    <property type="term" value="P:oogenesis"/>
    <property type="evidence" value="ECO:0007669"/>
    <property type="project" value="EnsemblMetazoa"/>
</dbReference>
<dbReference type="GO" id="GO:0007131">
    <property type="term" value="P:reciprocal meiotic recombination"/>
    <property type="evidence" value="ECO:0007669"/>
    <property type="project" value="EnsemblMetazoa"/>
</dbReference>
<dbReference type="GO" id="GO:0010212">
    <property type="term" value="P:response to ionizing radiation"/>
    <property type="evidence" value="ECO:0000250"/>
    <property type="project" value="UniProtKB"/>
</dbReference>
<dbReference type="CDD" id="cd18793">
    <property type="entry name" value="SF2_C_SNF"/>
    <property type="match status" value="1"/>
</dbReference>
<dbReference type="FunFam" id="3.40.50.10810:FF:000010">
    <property type="entry name" value="DNA repair and recombination protein RAD54-like"/>
    <property type="match status" value="1"/>
</dbReference>
<dbReference type="FunFam" id="3.40.50.300:FF:000332">
    <property type="entry name" value="DNA repair and recombination protein RAD54-like"/>
    <property type="match status" value="1"/>
</dbReference>
<dbReference type="Gene3D" id="3.40.50.300">
    <property type="entry name" value="P-loop containing nucleotide triphosphate hydrolases"/>
    <property type="match status" value="1"/>
</dbReference>
<dbReference type="Gene3D" id="1.20.120.850">
    <property type="entry name" value="SWI2/SNF2 ATPases, N-terminal domain"/>
    <property type="match status" value="1"/>
</dbReference>
<dbReference type="Gene3D" id="3.40.50.10810">
    <property type="entry name" value="Tandem AAA-ATPase domain"/>
    <property type="match status" value="1"/>
</dbReference>
<dbReference type="InterPro" id="IPR014001">
    <property type="entry name" value="Helicase_ATP-bd"/>
</dbReference>
<dbReference type="InterPro" id="IPR001650">
    <property type="entry name" value="Helicase_C-like"/>
</dbReference>
<dbReference type="InterPro" id="IPR027417">
    <property type="entry name" value="P-loop_NTPase"/>
</dbReference>
<dbReference type="InterPro" id="IPR013967">
    <property type="entry name" value="Rad54_N"/>
</dbReference>
<dbReference type="InterPro" id="IPR038718">
    <property type="entry name" value="SNF2-like_sf"/>
</dbReference>
<dbReference type="InterPro" id="IPR049730">
    <property type="entry name" value="SNF2/RAD54-like_C"/>
</dbReference>
<dbReference type="InterPro" id="IPR000330">
    <property type="entry name" value="SNF2_N"/>
</dbReference>
<dbReference type="InterPro" id="IPR050496">
    <property type="entry name" value="SNF2_RAD54_helicase_repair"/>
</dbReference>
<dbReference type="PANTHER" id="PTHR45629:SF7">
    <property type="entry name" value="DNA EXCISION REPAIR PROTEIN ERCC-6-RELATED"/>
    <property type="match status" value="1"/>
</dbReference>
<dbReference type="PANTHER" id="PTHR45629">
    <property type="entry name" value="SNF2/RAD54 FAMILY MEMBER"/>
    <property type="match status" value="1"/>
</dbReference>
<dbReference type="Pfam" id="PF00271">
    <property type="entry name" value="Helicase_C"/>
    <property type="match status" value="1"/>
</dbReference>
<dbReference type="Pfam" id="PF08658">
    <property type="entry name" value="Rad54_N"/>
    <property type="match status" value="1"/>
</dbReference>
<dbReference type="Pfam" id="PF00176">
    <property type="entry name" value="SNF2-rel_dom"/>
    <property type="match status" value="1"/>
</dbReference>
<dbReference type="SMART" id="SM00487">
    <property type="entry name" value="DEXDc"/>
    <property type="match status" value="1"/>
</dbReference>
<dbReference type="SMART" id="SM00490">
    <property type="entry name" value="HELICc"/>
    <property type="match status" value="1"/>
</dbReference>
<dbReference type="SUPFAM" id="SSF52540">
    <property type="entry name" value="P-loop containing nucleoside triphosphate hydrolases"/>
    <property type="match status" value="2"/>
</dbReference>
<dbReference type="PROSITE" id="PS51192">
    <property type="entry name" value="HELICASE_ATP_BIND_1"/>
    <property type="match status" value="1"/>
</dbReference>
<dbReference type="PROSITE" id="PS51194">
    <property type="entry name" value="HELICASE_CTER"/>
    <property type="match status" value="1"/>
</dbReference>
<proteinExistence type="inferred from homology"/>
<gene>
    <name evidence="2" type="primary">okr</name>
    <name type="ORF">GJ18280</name>
</gene>